<evidence type="ECO:0000255" key="1">
    <source>
        <dbReference type="HAMAP-Rule" id="MF_01394"/>
    </source>
</evidence>
<keyword id="KW-0150">Chloroplast</keyword>
<keyword id="KW-0472">Membrane</keyword>
<keyword id="KW-0520">NAD</keyword>
<keyword id="KW-0521">NADP</keyword>
<keyword id="KW-0934">Plastid</keyword>
<keyword id="KW-0618">Plastoquinone</keyword>
<keyword id="KW-0874">Quinone</keyword>
<keyword id="KW-0793">Thylakoid</keyword>
<keyword id="KW-1278">Translocase</keyword>
<keyword id="KW-0812">Transmembrane</keyword>
<keyword id="KW-1133">Transmembrane helix</keyword>
<keyword id="KW-0813">Transport</keyword>
<feature type="chain" id="PRO_0000362874" description="NAD(P)H-quinone oxidoreductase subunit 3, chloroplastic">
    <location>
        <begin position="1"/>
        <end position="121"/>
    </location>
</feature>
<feature type="transmembrane region" description="Helical" evidence="1">
    <location>
        <begin position="10"/>
        <end position="30"/>
    </location>
</feature>
<feature type="transmembrane region" description="Helical" evidence="1">
    <location>
        <begin position="65"/>
        <end position="85"/>
    </location>
</feature>
<feature type="transmembrane region" description="Helical" evidence="1">
    <location>
        <begin position="90"/>
        <end position="110"/>
    </location>
</feature>
<comment type="function">
    <text evidence="1">NDH shuttles electrons from NAD(P)H:plastoquinone, via FMN and iron-sulfur (Fe-S) centers, to quinones in the photosynthetic chain and possibly in a chloroplast respiratory chain. The immediate electron acceptor for the enzyme in this species is believed to be plastoquinone. Couples the redox reaction to proton translocation, and thus conserves the redox energy in a proton gradient.</text>
</comment>
<comment type="catalytic activity">
    <reaction evidence="1">
        <text>a plastoquinone + NADH + (n+1) H(+)(in) = a plastoquinol + NAD(+) + n H(+)(out)</text>
        <dbReference type="Rhea" id="RHEA:42608"/>
        <dbReference type="Rhea" id="RHEA-COMP:9561"/>
        <dbReference type="Rhea" id="RHEA-COMP:9562"/>
        <dbReference type="ChEBI" id="CHEBI:15378"/>
        <dbReference type="ChEBI" id="CHEBI:17757"/>
        <dbReference type="ChEBI" id="CHEBI:57540"/>
        <dbReference type="ChEBI" id="CHEBI:57945"/>
        <dbReference type="ChEBI" id="CHEBI:62192"/>
    </reaction>
</comment>
<comment type="catalytic activity">
    <reaction evidence="1">
        <text>a plastoquinone + NADPH + (n+1) H(+)(in) = a plastoquinol + NADP(+) + n H(+)(out)</text>
        <dbReference type="Rhea" id="RHEA:42612"/>
        <dbReference type="Rhea" id="RHEA-COMP:9561"/>
        <dbReference type="Rhea" id="RHEA-COMP:9562"/>
        <dbReference type="ChEBI" id="CHEBI:15378"/>
        <dbReference type="ChEBI" id="CHEBI:17757"/>
        <dbReference type="ChEBI" id="CHEBI:57783"/>
        <dbReference type="ChEBI" id="CHEBI:58349"/>
        <dbReference type="ChEBI" id="CHEBI:62192"/>
    </reaction>
</comment>
<comment type="subunit">
    <text evidence="1">NDH is composed of at least 16 different subunits, 5 of which are encoded in the nucleus.</text>
</comment>
<comment type="subcellular location">
    <subcellularLocation>
        <location evidence="1">Plastid</location>
        <location evidence="1">Chloroplast thylakoid membrane</location>
        <topology evidence="1">Multi-pass membrane protein</topology>
    </subcellularLocation>
</comment>
<comment type="similarity">
    <text evidence="1">Belongs to the complex I subunit 3 family.</text>
</comment>
<proteinExistence type="inferred from homology"/>
<reference key="1">
    <citation type="journal article" date="2005" name="BMC Biol.">
        <title>The complete chloroplast DNA sequences of the charophycean green algae Staurastrum and Zygnema reveal that the chloroplast genome underwent extensive changes during the evolution of the Zygnematales.</title>
        <authorList>
            <person name="Turmel M."/>
            <person name="Otis C."/>
            <person name="Lemieux C."/>
        </authorList>
    </citation>
    <scope>NUCLEOTIDE SEQUENCE [LARGE SCALE GENOMIC DNA]</scope>
</reference>
<geneLocation type="chloroplast"/>
<gene>
    <name evidence="1" type="primary">ndhC</name>
</gene>
<protein>
    <recommendedName>
        <fullName evidence="1">NAD(P)H-quinone oxidoreductase subunit 3, chloroplastic</fullName>
        <ecNumber evidence="1">7.1.1.-</ecNumber>
    </recommendedName>
    <alternativeName>
        <fullName evidence="1">NAD(P)H dehydrogenase subunit 3</fullName>
    </alternativeName>
    <alternativeName>
        <fullName evidence="1">NADH-plastoquinone oxidoreductase subunit 3</fullName>
    </alternativeName>
</protein>
<name>NU3C_STAPU</name>
<organism>
    <name type="scientific">Staurastrum punctulatum</name>
    <name type="common">Green alga</name>
    <name type="synonym">Cosmoastrum punctulatum</name>
    <dbReference type="NCBI Taxonomy" id="102822"/>
    <lineage>
        <taxon>Eukaryota</taxon>
        <taxon>Viridiplantae</taxon>
        <taxon>Streptophyta</taxon>
        <taxon>Zygnematophyceae</taxon>
        <taxon>Zygnematophycidae</taxon>
        <taxon>Desmidiales</taxon>
        <taxon>Desmidiaceae</taxon>
        <taxon>Staurastrum</taxon>
    </lineage>
</organism>
<dbReference type="EC" id="7.1.1.-" evidence="1"/>
<dbReference type="EMBL" id="AY958085">
    <property type="protein sequence ID" value="AAX45699.1"/>
    <property type="molecule type" value="Genomic_DNA"/>
</dbReference>
<dbReference type="RefSeq" id="YP_636386.1">
    <property type="nucleotide sequence ID" value="NC_008116.1"/>
</dbReference>
<dbReference type="SMR" id="Q32RZ0"/>
<dbReference type="GeneID" id="4108654"/>
<dbReference type="GO" id="GO:0009535">
    <property type="term" value="C:chloroplast thylakoid membrane"/>
    <property type="evidence" value="ECO:0007669"/>
    <property type="project" value="UniProtKB-SubCell"/>
</dbReference>
<dbReference type="GO" id="GO:0030964">
    <property type="term" value="C:NADH dehydrogenase complex"/>
    <property type="evidence" value="ECO:0007669"/>
    <property type="project" value="TreeGrafter"/>
</dbReference>
<dbReference type="GO" id="GO:0008137">
    <property type="term" value="F:NADH dehydrogenase (ubiquinone) activity"/>
    <property type="evidence" value="ECO:0007669"/>
    <property type="project" value="InterPro"/>
</dbReference>
<dbReference type="GO" id="GO:0048038">
    <property type="term" value="F:quinone binding"/>
    <property type="evidence" value="ECO:0007669"/>
    <property type="project" value="UniProtKB-KW"/>
</dbReference>
<dbReference type="GO" id="GO:0019684">
    <property type="term" value="P:photosynthesis, light reaction"/>
    <property type="evidence" value="ECO:0007669"/>
    <property type="project" value="UniProtKB-UniRule"/>
</dbReference>
<dbReference type="FunFam" id="1.20.58.1610:FF:000001">
    <property type="entry name" value="NAD(P)H-quinone oxidoreductase subunit 3, chloroplastic"/>
    <property type="match status" value="1"/>
</dbReference>
<dbReference type="Gene3D" id="1.20.58.1610">
    <property type="entry name" value="NADH:ubiquinone/plastoquinone oxidoreductase, chain 3"/>
    <property type="match status" value="1"/>
</dbReference>
<dbReference type="HAMAP" id="MF_01394">
    <property type="entry name" value="NDH1_NuoA"/>
    <property type="match status" value="1"/>
</dbReference>
<dbReference type="InterPro" id="IPR023043">
    <property type="entry name" value="NAD(P)H_OxRDtase_bac/plastid"/>
</dbReference>
<dbReference type="InterPro" id="IPR000440">
    <property type="entry name" value="NADH_UbQ/plastoQ_OxRdtase_su3"/>
</dbReference>
<dbReference type="InterPro" id="IPR038430">
    <property type="entry name" value="NDAH_ubi_oxred_su3_sf"/>
</dbReference>
<dbReference type="PANTHER" id="PTHR11058">
    <property type="entry name" value="NADH-UBIQUINONE OXIDOREDUCTASE CHAIN 3"/>
    <property type="match status" value="1"/>
</dbReference>
<dbReference type="PANTHER" id="PTHR11058:SF9">
    <property type="entry name" value="NADH-UBIQUINONE OXIDOREDUCTASE CHAIN 3"/>
    <property type="match status" value="1"/>
</dbReference>
<dbReference type="Pfam" id="PF00507">
    <property type="entry name" value="Oxidored_q4"/>
    <property type="match status" value="1"/>
</dbReference>
<sequence>MPILPKYESFWAFLLIACLIPVLAISVSNLVAPSTSKNPEKSTTYESGIEPMGESWIQFQIRYYMFALVFVIFDVETVFLYPWAMSFDDLGIIAFAEVLVFVIILIIGLIYAWRKGALEWS</sequence>
<accession>Q32RZ0</accession>